<evidence type="ECO:0000255" key="1">
    <source>
        <dbReference type="HAMAP-Rule" id="MF_01507"/>
    </source>
</evidence>
<comment type="similarity">
    <text evidence="1">Belongs to the UPF0297 family.</text>
</comment>
<dbReference type="EMBL" id="CP000413">
    <property type="protein sequence ID" value="ABJ59827.1"/>
    <property type="molecule type" value="Genomic_DNA"/>
</dbReference>
<dbReference type="RefSeq" id="WP_003647717.1">
    <property type="nucleotide sequence ID" value="NZ_WBMG01000012.1"/>
</dbReference>
<dbReference type="SMR" id="Q045P5"/>
<dbReference type="KEGG" id="lga:LGAS_0422"/>
<dbReference type="HOGENOM" id="CLU_162466_0_0_9"/>
<dbReference type="BioCyc" id="LGAS324831:G1G6Y-422-MONOMER"/>
<dbReference type="Proteomes" id="UP000000664">
    <property type="component" value="Chromosome"/>
</dbReference>
<dbReference type="HAMAP" id="MF_01507">
    <property type="entry name" value="UPF0297"/>
    <property type="match status" value="1"/>
</dbReference>
<dbReference type="InterPro" id="IPR009309">
    <property type="entry name" value="IreB"/>
</dbReference>
<dbReference type="NCBIfam" id="NF003997">
    <property type="entry name" value="PRK05473.1"/>
    <property type="match status" value="1"/>
</dbReference>
<dbReference type="PANTHER" id="PTHR40067">
    <property type="entry name" value="UPF0297 PROTEIN YRZL"/>
    <property type="match status" value="1"/>
</dbReference>
<dbReference type="PANTHER" id="PTHR40067:SF1">
    <property type="entry name" value="UPF0297 PROTEIN YRZL"/>
    <property type="match status" value="1"/>
</dbReference>
<dbReference type="Pfam" id="PF06135">
    <property type="entry name" value="IreB"/>
    <property type="match status" value="1"/>
</dbReference>
<dbReference type="PIRSF" id="PIRSF037258">
    <property type="entry name" value="DUF965_bac"/>
    <property type="match status" value="1"/>
</dbReference>
<gene>
    <name type="ordered locus">LGAS_0422</name>
</gene>
<protein>
    <recommendedName>
        <fullName evidence="1">UPF0297 protein LGAS_0422</fullName>
    </recommendedName>
</protein>
<reference key="1">
    <citation type="journal article" date="2006" name="Proc. Natl. Acad. Sci. U.S.A.">
        <title>Comparative genomics of the lactic acid bacteria.</title>
        <authorList>
            <person name="Makarova K.S."/>
            <person name="Slesarev A."/>
            <person name="Wolf Y.I."/>
            <person name="Sorokin A."/>
            <person name="Mirkin B."/>
            <person name="Koonin E.V."/>
            <person name="Pavlov A."/>
            <person name="Pavlova N."/>
            <person name="Karamychev V."/>
            <person name="Polouchine N."/>
            <person name="Shakhova V."/>
            <person name="Grigoriev I."/>
            <person name="Lou Y."/>
            <person name="Rohksar D."/>
            <person name="Lucas S."/>
            <person name="Huang K."/>
            <person name="Goodstein D.M."/>
            <person name="Hawkins T."/>
            <person name="Plengvidhya V."/>
            <person name="Welker D."/>
            <person name="Hughes J."/>
            <person name="Goh Y."/>
            <person name="Benson A."/>
            <person name="Baldwin K."/>
            <person name="Lee J.-H."/>
            <person name="Diaz-Muniz I."/>
            <person name="Dosti B."/>
            <person name="Smeianov V."/>
            <person name="Wechter W."/>
            <person name="Barabote R."/>
            <person name="Lorca G."/>
            <person name="Altermann E."/>
            <person name="Barrangou R."/>
            <person name="Ganesan B."/>
            <person name="Xie Y."/>
            <person name="Rawsthorne H."/>
            <person name="Tamir D."/>
            <person name="Parker C."/>
            <person name="Breidt F."/>
            <person name="Broadbent J.R."/>
            <person name="Hutkins R."/>
            <person name="O'Sullivan D."/>
            <person name="Steele J."/>
            <person name="Unlu G."/>
            <person name="Saier M.H. Jr."/>
            <person name="Klaenhammer T."/>
            <person name="Richardson P."/>
            <person name="Kozyavkin S."/>
            <person name="Weimer B.C."/>
            <person name="Mills D.A."/>
        </authorList>
    </citation>
    <scope>NUCLEOTIDE SEQUENCE [LARGE SCALE GENOMIC DNA]</scope>
    <source>
        <strain>ATCC 33323 / DSM 20243 / BCRC 14619 / CIP 102991 / JCM 1131 / KCTC 3163 / NCIMB 11718 / NCTC 13722 / AM63</strain>
    </source>
</reference>
<sequence>MSSLDKTMHFDFNQNKGKNVYDTLQDVYNALEEKGYSPINQIVGYLLSGDPAYIPRHNDARNLILKHERDEIIEELVKSYLGKNK</sequence>
<name>Y422_LACGA</name>
<feature type="chain" id="PRO_0000289304" description="UPF0297 protein LGAS_0422">
    <location>
        <begin position="1"/>
        <end position="85"/>
    </location>
</feature>
<proteinExistence type="inferred from homology"/>
<organism>
    <name type="scientific">Lactobacillus gasseri (strain ATCC 33323 / DSM 20243 / BCRC 14619 / CIP 102991 / JCM 1131 / KCTC 3163 / NCIMB 11718 / NCTC 13722 / AM63)</name>
    <dbReference type="NCBI Taxonomy" id="324831"/>
    <lineage>
        <taxon>Bacteria</taxon>
        <taxon>Bacillati</taxon>
        <taxon>Bacillota</taxon>
        <taxon>Bacilli</taxon>
        <taxon>Lactobacillales</taxon>
        <taxon>Lactobacillaceae</taxon>
        <taxon>Lactobacillus</taxon>
    </lineage>
</organism>
<accession>Q045P5</accession>